<feature type="signal peptide" evidence="1">
    <location>
        <begin position="1"/>
        <end position="25"/>
    </location>
</feature>
<feature type="chain" id="PRO_0000035615" description="Enterotoxin type G">
    <location>
        <begin position="26"/>
        <end position="258"/>
    </location>
</feature>
<feature type="disulfide bond" evidence="1">
    <location>
        <begin position="116"/>
        <end position="133"/>
    </location>
</feature>
<protein>
    <recommendedName>
        <fullName>Enterotoxin type G</fullName>
    </recommendedName>
    <alternativeName>
        <fullName>SEG</fullName>
    </alternativeName>
</protein>
<comment type="function">
    <text>Staphylococcal enterotoxins cause the intoxication staphylococcal food poisoning syndrome. The illness is characterized by high fever, hypotension, diarrhea, shock, and in some cases death.</text>
</comment>
<comment type="subcellular location">
    <subcellularLocation>
        <location>Secreted</location>
    </subcellularLocation>
</comment>
<comment type="similarity">
    <text evidence="2">Belongs to the staphylococcal/streptococcal toxin family.</text>
</comment>
<dbReference type="EMBL" id="BA000018">
    <property type="protein sequence ID" value="BAB42910.1"/>
    <property type="molecule type" value="Genomic_DNA"/>
</dbReference>
<dbReference type="PIR" id="G89968">
    <property type="entry name" value="G89968"/>
</dbReference>
<dbReference type="RefSeq" id="WP_000736712.1">
    <property type="nucleotide sequence ID" value="NC_002745.2"/>
</dbReference>
<dbReference type="SMR" id="P0A0L7"/>
<dbReference type="EnsemblBacteria" id="BAB42910">
    <property type="protein sequence ID" value="BAB42910"/>
    <property type="gene ID" value="BAB42910"/>
</dbReference>
<dbReference type="KEGG" id="sau:SA1642"/>
<dbReference type="HOGENOM" id="CLU_093855_0_1_9"/>
<dbReference type="PRO" id="PR:P0A0L7"/>
<dbReference type="GO" id="GO:0005576">
    <property type="term" value="C:extracellular region"/>
    <property type="evidence" value="ECO:0007669"/>
    <property type="project" value="UniProtKB-SubCell"/>
</dbReference>
<dbReference type="GO" id="GO:0090729">
    <property type="term" value="F:toxin activity"/>
    <property type="evidence" value="ECO:0007669"/>
    <property type="project" value="UniProtKB-KW"/>
</dbReference>
<dbReference type="Gene3D" id="2.40.50.110">
    <property type="match status" value="1"/>
</dbReference>
<dbReference type="Gene3D" id="3.10.20.120">
    <property type="match status" value="1"/>
</dbReference>
<dbReference type="InterPro" id="IPR008992">
    <property type="entry name" value="Enterotoxin"/>
</dbReference>
<dbReference type="InterPro" id="IPR006126">
    <property type="entry name" value="Staph/Strept_toxin_CS"/>
</dbReference>
<dbReference type="InterPro" id="IPR006173">
    <property type="entry name" value="Staph_tox_OB"/>
</dbReference>
<dbReference type="InterPro" id="IPR016091">
    <property type="entry name" value="SuperAg_toxin_C"/>
</dbReference>
<dbReference type="InterPro" id="IPR013307">
    <property type="entry name" value="Superantigen_bac"/>
</dbReference>
<dbReference type="InterPro" id="IPR006123">
    <property type="entry name" value="Toxin_b-grasp_Staph/Strep"/>
</dbReference>
<dbReference type="InterPro" id="IPR006177">
    <property type="entry name" value="Toxin_bac"/>
</dbReference>
<dbReference type="Pfam" id="PF02876">
    <property type="entry name" value="Stap_Strp_tox_C"/>
    <property type="match status" value="1"/>
</dbReference>
<dbReference type="Pfam" id="PF01123">
    <property type="entry name" value="Stap_Strp_toxin"/>
    <property type="match status" value="1"/>
</dbReference>
<dbReference type="PRINTS" id="PR00279">
    <property type="entry name" value="BACTRLTOXIN"/>
</dbReference>
<dbReference type="PRINTS" id="PR01898">
    <property type="entry name" value="SAGSUPRFAMLY"/>
</dbReference>
<dbReference type="SUPFAM" id="SSF50203">
    <property type="entry name" value="Bacterial enterotoxins"/>
    <property type="match status" value="1"/>
</dbReference>
<dbReference type="SUPFAM" id="SSF54334">
    <property type="entry name" value="Superantigen toxins, C-terminal domain"/>
    <property type="match status" value="1"/>
</dbReference>
<dbReference type="PROSITE" id="PS00278">
    <property type="entry name" value="STAPH_STREP_TOXIN_2"/>
    <property type="match status" value="1"/>
</dbReference>
<reference key="1">
    <citation type="journal article" date="2001" name="Lancet">
        <title>Whole genome sequencing of meticillin-resistant Staphylococcus aureus.</title>
        <authorList>
            <person name="Kuroda M."/>
            <person name="Ohta T."/>
            <person name="Uchiyama I."/>
            <person name="Baba T."/>
            <person name="Yuzawa H."/>
            <person name="Kobayashi I."/>
            <person name="Cui L."/>
            <person name="Oguchi A."/>
            <person name="Aoki K."/>
            <person name="Nagai Y."/>
            <person name="Lian J.-Q."/>
            <person name="Ito T."/>
            <person name="Kanamori M."/>
            <person name="Matsumaru H."/>
            <person name="Maruyama A."/>
            <person name="Murakami H."/>
            <person name="Hosoyama A."/>
            <person name="Mizutani-Ui Y."/>
            <person name="Takahashi N.K."/>
            <person name="Sawano T."/>
            <person name="Inoue R."/>
            <person name="Kaito C."/>
            <person name="Sekimizu K."/>
            <person name="Hirakawa H."/>
            <person name="Kuhara S."/>
            <person name="Goto S."/>
            <person name="Yabuzaki J."/>
            <person name="Kanehisa M."/>
            <person name="Yamashita A."/>
            <person name="Oshima K."/>
            <person name="Furuya K."/>
            <person name="Yoshino C."/>
            <person name="Shiba T."/>
            <person name="Hattori M."/>
            <person name="Ogasawara N."/>
            <person name="Hayashi H."/>
            <person name="Hiramatsu K."/>
        </authorList>
    </citation>
    <scope>NUCLEOTIDE SEQUENCE [LARGE SCALE GENOMIC DNA]</scope>
    <source>
        <strain>N315</strain>
    </source>
</reference>
<sequence length="258" mass="29940">MKKLSTVIIILILEIVFHNMNYVNAQPDPKLDELNKVSDYKNNKGTMGNVMNLYTSPPVEGRGVINSRQFLSHDLIFPIEYKSYNEVKTELENTELANNYKDKKVDIFGVPYFYTCIIPKSEPDINQNFGGCCMYGGLTFNSSENERDKLITVQVTIDNRQSLGFTITTNKNMVTIQELDYKARHWLTKEKKLYEFDGSAFESGYIKFTEKNNTSFWFDLFPKKELVPFVPYKFLNIYGDNKVVDSKSIKMEVFLNTH</sequence>
<evidence type="ECO:0000250" key="1"/>
<evidence type="ECO:0000305" key="2"/>
<gene>
    <name type="primary">entG</name>
    <name type="synonym">seg</name>
    <name type="ordered locus">SA1642</name>
</gene>
<keyword id="KW-1015">Disulfide bond</keyword>
<keyword id="KW-0260">Enterotoxin</keyword>
<keyword id="KW-0964">Secreted</keyword>
<keyword id="KW-0732">Signal</keyword>
<keyword id="KW-0766">Superantigen</keyword>
<keyword id="KW-0800">Toxin</keyword>
<keyword id="KW-0843">Virulence</keyword>
<name>ETXG_STAAN</name>
<proteinExistence type="inferred from homology"/>
<organism>
    <name type="scientific">Staphylococcus aureus (strain N315)</name>
    <dbReference type="NCBI Taxonomy" id="158879"/>
    <lineage>
        <taxon>Bacteria</taxon>
        <taxon>Bacillati</taxon>
        <taxon>Bacillota</taxon>
        <taxon>Bacilli</taxon>
        <taxon>Bacillales</taxon>
        <taxon>Staphylococcaceae</taxon>
        <taxon>Staphylococcus</taxon>
    </lineage>
</organism>
<accession>P0A0L7</accession>
<accession>O85382</accession>